<organism>
    <name type="scientific">Acorus calamus</name>
    <name type="common">Sweet flag</name>
    <dbReference type="NCBI Taxonomy" id="4465"/>
    <lineage>
        <taxon>Eukaryota</taxon>
        <taxon>Viridiplantae</taxon>
        <taxon>Streptophyta</taxon>
        <taxon>Embryophyta</taxon>
        <taxon>Tracheophyta</taxon>
        <taxon>Spermatophyta</taxon>
        <taxon>Magnoliopsida</taxon>
        <taxon>Liliopsida</taxon>
        <taxon>Acoraceae</taxon>
        <taxon>Acorus</taxon>
    </lineage>
</organism>
<reference key="1">
    <citation type="journal article" date="2005" name="Mol. Biol. Evol.">
        <title>Analysis of Acorus calamus chloroplast genome and its phylogenetic implications.</title>
        <authorList>
            <person name="Goremykin V.V."/>
            <person name="Holland B."/>
            <person name="Hirsch-Ernst K.I."/>
            <person name="Hellwig F.H."/>
        </authorList>
    </citation>
    <scope>NUCLEOTIDE SEQUENCE [LARGE SCALE GENOMIC DNA]</scope>
</reference>
<name>PETG_ACOCL</name>
<sequence length="37" mass="4170">MIEVFLFGIVLGLIPITLAGLFVTAYLQYRRGDQLDL</sequence>
<proteinExistence type="inferred from homology"/>
<gene>
    <name evidence="1" type="primary">petG</name>
</gene>
<keyword id="KW-0150">Chloroplast</keyword>
<keyword id="KW-0249">Electron transport</keyword>
<keyword id="KW-0472">Membrane</keyword>
<keyword id="KW-0602">Photosynthesis</keyword>
<keyword id="KW-0934">Plastid</keyword>
<keyword id="KW-0793">Thylakoid</keyword>
<keyword id="KW-0812">Transmembrane</keyword>
<keyword id="KW-1133">Transmembrane helix</keyword>
<keyword id="KW-0813">Transport</keyword>
<evidence type="ECO:0000255" key="1">
    <source>
        <dbReference type="HAMAP-Rule" id="MF_00432"/>
    </source>
</evidence>
<geneLocation type="chloroplast"/>
<feature type="chain" id="PRO_0000355364" description="Cytochrome b6-f complex subunit 5">
    <location>
        <begin position="1"/>
        <end position="37"/>
    </location>
</feature>
<feature type="transmembrane region" description="Helical" evidence="1">
    <location>
        <begin position="5"/>
        <end position="25"/>
    </location>
</feature>
<accession>Q3V516</accession>
<comment type="function">
    <text evidence="1">Component of the cytochrome b6-f complex, which mediates electron transfer between photosystem II (PSII) and photosystem I (PSI), cyclic electron flow around PSI, and state transitions. PetG is required for either the stability or assembly of the cytochrome b6-f complex.</text>
</comment>
<comment type="subunit">
    <text evidence="1">The 4 large subunits of the cytochrome b6-f complex are cytochrome b6, subunit IV (17 kDa polypeptide, PetD), cytochrome f and the Rieske protein, while the 4 small subunits are PetG, PetL, PetM and PetN. The complex functions as a dimer.</text>
</comment>
<comment type="subcellular location">
    <subcellularLocation>
        <location evidence="1">Plastid</location>
        <location evidence="1">Chloroplast thylakoid membrane</location>
        <topology evidence="1">Single-pass membrane protein</topology>
    </subcellularLocation>
</comment>
<comment type="similarity">
    <text evidence="1">Belongs to the PetG family.</text>
</comment>
<protein>
    <recommendedName>
        <fullName evidence="1">Cytochrome b6-f complex subunit 5</fullName>
    </recommendedName>
    <alternativeName>
        <fullName evidence="1">Cytochrome b6-f complex subunit PetG</fullName>
    </alternativeName>
    <alternativeName>
        <fullName evidence="1">Cytochrome b6-f complex subunit V</fullName>
    </alternativeName>
</protein>
<dbReference type="EMBL" id="AJ879453">
    <property type="protein sequence ID" value="CAI53812.1"/>
    <property type="molecule type" value="Genomic_DNA"/>
</dbReference>
<dbReference type="RefSeq" id="YP_319783.1">
    <property type="nucleotide sequence ID" value="NC_007407.1"/>
</dbReference>
<dbReference type="SMR" id="Q3V516"/>
<dbReference type="GeneID" id="3677492"/>
<dbReference type="GO" id="GO:0009535">
    <property type="term" value="C:chloroplast thylakoid membrane"/>
    <property type="evidence" value="ECO:0007669"/>
    <property type="project" value="UniProtKB-SubCell"/>
</dbReference>
<dbReference type="GO" id="GO:0009512">
    <property type="term" value="C:cytochrome b6f complex"/>
    <property type="evidence" value="ECO:0007669"/>
    <property type="project" value="InterPro"/>
</dbReference>
<dbReference type="GO" id="GO:0045158">
    <property type="term" value="F:electron transporter, transferring electrons within cytochrome b6/f complex of photosystem II activity"/>
    <property type="evidence" value="ECO:0007669"/>
    <property type="project" value="UniProtKB-UniRule"/>
</dbReference>
<dbReference type="GO" id="GO:0017004">
    <property type="term" value="P:cytochrome complex assembly"/>
    <property type="evidence" value="ECO:0007669"/>
    <property type="project" value="UniProtKB-UniRule"/>
</dbReference>
<dbReference type="GO" id="GO:0015979">
    <property type="term" value="P:photosynthesis"/>
    <property type="evidence" value="ECO:0007669"/>
    <property type="project" value="UniProtKB-KW"/>
</dbReference>
<dbReference type="HAMAP" id="MF_00432">
    <property type="entry name" value="Cytb6_f_PetG"/>
    <property type="match status" value="1"/>
</dbReference>
<dbReference type="InterPro" id="IPR003683">
    <property type="entry name" value="Cyt_6/f_cplx_su5"/>
</dbReference>
<dbReference type="InterPro" id="IPR036099">
    <property type="entry name" value="Cyt_6/f_cplx_su5_sf"/>
</dbReference>
<dbReference type="NCBIfam" id="NF001907">
    <property type="entry name" value="PRK00665.1"/>
    <property type="match status" value="1"/>
</dbReference>
<dbReference type="Pfam" id="PF02529">
    <property type="entry name" value="PetG"/>
    <property type="match status" value="1"/>
</dbReference>
<dbReference type="PIRSF" id="PIRSF000034">
    <property type="entry name" value="Cyt_b6-f_V"/>
    <property type="match status" value="1"/>
</dbReference>
<dbReference type="SUPFAM" id="SSF103446">
    <property type="entry name" value="PetG subunit of the cytochrome b6f complex"/>
    <property type="match status" value="1"/>
</dbReference>